<accession>B2S533</accession>
<comment type="function">
    <text evidence="1">Catalyzes the NADPH-dependent reduction of N-acetyl-5-glutamyl phosphate to yield N-acetyl-L-glutamate 5-semialdehyde.</text>
</comment>
<comment type="catalytic activity">
    <reaction evidence="1">
        <text>N-acetyl-L-glutamate 5-semialdehyde + phosphate + NADP(+) = N-acetyl-L-glutamyl 5-phosphate + NADPH + H(+)</text>
        <dbReference type="Rhea" id="RHEA:21588"/>
        <dbReference type="ChEBI" id="CHEBI:15378"/>
        <dbReference type="ChEBI" id="CHEBI:29123"/>
        <dbReference type="ChEBI" id="CHEBI:43474"/>
        <dbReference type="ChEBI" id="CHEBI:57783"/>
        <dbReference type="ChEBI" id="CHEBI:57936"/>
        <dbReference type="ChEBI" id="CHEBI:58349"/>
        <dbReference type="EC" id="1.2.1.38"/>
    </reaction>
</comment>
<comment type="pathway">
    <text evidence="1">Amino-acid biosynthesis; L-arginine biosynthesis; N(2)-acetyl-L-ornithine from L-glutamate: step 3/4.</text>
</comment>
<comment type="subcellular location">
    <subcellularLocation>
        <location evidence="1">Cytoplasm</location>
    </subcellularLocation>
</comment>
<comment type="similarity">
    <text evidence="1">Belongs to the NAGSA dehydrogenase family. Type 2 subfamily.</text>
</comment>
<dbReference type="EC" id="1.2.1.38" evidence="1"/>
<dbReference type="EMBL" id="CP000887">
    <property type="protein sequence ID" value="ACD72280.1"/>
    <property type="molecule type" value="Genomic_DNA"/>
</dbReference>
<dbReference type="RefSeq" id="WP_002963923.1">
    <property type="nucleotide sequence ID" value="NC_010742.1"/>
</dbReference>
<dbReference type="SMR" id="B2S533"/>
<dbReference type="GeneID" id="93016823"/>
<dbReference type="KEGG" id="bmc:BAbS19_I07560"/>
<dbReference type="HOGENOM" id="CLU_077118_0_0_5"/>
<dbReference type="UniPathway" id="UPA00068">
    <property type="reaction ID" value="UER00108"/>
</dbReference>
<dbReference type="Proteomes" id="UP000002565">
    <property type="component" value="Chromosome 1"/>
</dbReference>
<dbReference type="GO" id="GO:0005737">
    <property type="term" value="C:cytoplasm"/>
    <property type="evidence" value="ECO:0007669"/>
    <property type="project" value="UniProtKB-SubCell"/>
</dbReference>
<dbReference type="GO" id="GO:0003942">
    <property type="term" value="F:N-acetyl-gamma-glutamyl-phosphate reductase activity"/>
    <property type="evidence" value="ECO:0007669"/>
    <property type="project" value="UniProtKB-UniRule"/>
</dbReference>
<dbReference type="GO" id="GO:0051287">
    <property type="term" value="F:NAD binding"/>
    <property type="evidence" value="ECO:0007669"/>
    <property type="project" value="InterPro"/>
</dbReference>
<dbReference type="GO" id="GO:0006526">
    <property type="term" value="P:L-arginine biosynthetic process"/>
    <property type="evidence" value="ECO:0007669"/>
    <property type="project" value="UniProtKB-UniRule"/>
</dbReference>
<dbReference type="CDD" id="cd23935">
    <property type="entry name" value="AGPR_2_C"/>
    <property type="match status" value="1"/>
</dbReference>
<dbReference type="CDD" id="cd17896">
    <property type="entry name" value="AGPR_2_N"/>
    <property type="match status" value="1"/>
</dbReference>
<dbReference type="Gene3D" id="3.30.360.10">
    <property type="entry name" value="Dihydrodipicolinate Reductase, domain 2"/>
    <property type="match status" value="1"/>
</dbReference>
<dbReference type="Gene3D" id="3.40.50.720">
    <property type="entry name" value="NAD(P)-binding Rossmann-like Domain"/>
    <property type="match status" value="1"/>
</dbReference>
<dbReference type="HAMAP" id="MF_01110">
    <property type="entry name" value="ArgC_type2"/>
    <property type="match status" value="1"/>
</dbReference>
<dbReference type="InterPro" id="IPR023013">
    <property type="entry name" value="AGPR_AS"/>
</dbReference>
<dbReference type="InterPro" id="IPR010136">
    <property type="entry name" value="AGPR_type-2"/>
</dbReference>
<dbReference type="InterPro" id="IPR036291">
    <property type="entry name" value="NAD(P)-bd_dom_sf"/>
</dbReference>
<dbReference type="InterPro" id="IPR050085">
    <property type="entry name" value="NAGSA_dehydrogenase"/>
</dbReference>
<dbReference type="InterPro" id="IPR000534">
    <property type="entry name" value="Semialdehyde_DH_NAD-bd"/>
</dbReference>
<dbReference type="NCBIfam" id="TIGR01851">
    <property type="entry name" value="argC_other"/>
    <property type="match status" value="1"/>
</dbReference>
<dbReference type="PANTHER" id="PTHR32338:SF10">
    <property type="entry name" value="N-ACETYL-GAMMA-GLUTAMYL-PHOSPHATE REDUCTASE, CHLOROPLASTIC-RELATED"/>
    <property type="match status" value="1"/>
</dbReference>
<dbReference type="PANTHER" id="PTHR32338">
    <property type="entry name" value="N-ACETYL-GAMMA-GLUTAMYL-PHOSPHATE REDUCTASE, CHLOROPLASTIC-RELATED-RELATED"/>
    <property type="match status" value="1"/>
</dbReference>
<dbReference type="Pfam" id="PF01118">
    <property type="entry name" value="Semialdhyde_dh"/>
    <property type="match status" value="1"/>
</dbReference>
<dbReference type="Pfam" id="PF22698">
    <property type="entry name" value="Semialdhyde_dhC_1"/>
    <property type="match status" value="1"/>
</dbReference>
<dbReference type="SMART" id="SM00859">
    <property type="entry name" value="Semialdhyde_dh"/>
    <property type="match status" value="1"/>
</dbReference>
<dbReference type="SUPFAM" id="SSF55347">
    <property type="entry name" value="Glyceraldehyde-3-phosphate dehydrogenase-like, C-terminal domain"/>
    <property type="match status" value="1"/>
</dbReference>
<dbReference type="SUPFAM" id="SSF51735">
    <property type="entry name" value="NAD(P)-binding Rossmann-fold domains"/>
    <property type="match status" value="1"/>
</dbReference>
<dbReference type="PROSITE" id="PS01224">
    <property type="entry name" value="ARGC"/>
    <property type="match status" value="1"/>
</dbReference>
<sequence length="310" mass="33797">MKPKIFIDGEHGTTGLQIRTRLAERDDLEVISIPEAERRNKDLRADYLRAADIAILCLPDDASKEAVSLLEGHNSTRIIDTSTAHRVHPDWAYGFAELAKGQRERIAEARLVANPGCYPTGAIALVRPLRDAGLLPADYPVSVNAVSGYTGGGKQLIAQMEDRNHPDYLAANNFLYGLPLKHKHVPELQLHGRLDRRPIFSPSVGRFPQGMIVQVPLFLSELEGSPSLAKVHAVLTEHYAGQDIVEVVPLEESAKLPRVDAEELAGKDGMKLFVFGTEDHGQVNLVALLDNLGKGASGAAVQNMNLMLGK</sequence>
<protein>
    <recommendedName>
        <fullName evidence="1">N-acetyl-gamma-glutamyl-phosphate reductase</fullName>
        <shortName evidence="1">AGPR</shortName>
        <ecNumber evidence="1">1.2.1.38</ecNumber>
    </recommendedName>
    <alternativeName>
        <fullName evidence="1">N-acetyl-glutamate semialdehyde dehydrogenase</fullName>
        <shortName evidence="1">NAGSA dehydrogenase</shortName>
    </alternativeName>
</protein>
<gene>
    <name evidence="1" type="primary">argC</name>
    <name type="ordered locus">BAbS19_I07560</name>
</gene>
<keyword id="KW-0028">Amino-acid biosynthesis</keyword>
<keyword id="KW-0055">Arginine biosynthesis</keyword>
<keyword id="KW-0963">Cytoplasm</keyword>
<keyword id="KW-0521">NADP</keyword>
<keyword id="KW-0560">Oxidoreductase</keyword>
<name>ARGC_BRUA1</name>
<proteinExistence type="inferred from homology"/>
<reference key="1">
    <citation type="journal article" date="2008" name="PLoS ONE">
        <title>Genome sequence of Brucella abortus vaccine strain S19 compared to virulent strains yields candidate virulence genes.</title>
        <authorList>
            <person name="Crasta O.R."/>
            <person name="Folkerts O."/>
            <person name="Fei Z."/>
            <person name="Mane S.P."/>
            <person name="Evans C."/>
            <person name="Martino-Catt S."/>
            <person name="Bricker B."/>
            <person name="Yu G."/>
            <person name="Du L."/>
            <person name="Sobral B.W."/>
        </authorList>
    </citation>
    <scope>NUCLEOTIDE SEQUENCE [LARGE SCALE GENOMIC DNA]</scope>
    <source>
        <strain>S19</strain>
    </source>
</reference>
<organism>
    <name type="scientific">Brucella abortus (strain S19)</name>
    <dbReference type="NCBI Taxonomy" id="430066"/>
    <lineage>
        <taxon>Bacteria</taxon>
        <taxon>Pseudomonadati</taxon>
        <taxon>Pseudomonadota</taxon>
        <taxon>Alphaproteobacteria</taxon>
        <taxon>Hyphomicrobiales</taxon>
        <taxon>Brucellaceae</taxon>
        <taxon>Brucella/Ochrobactrum group</taxon>
        <taxon>Brucella</taxon>
    </lineage>
</organism>
<evidence type="ECO:0000255" key="1">
    <source>
        <dbReference type="HAMAP-Rule" id="MF_01110"/>
    </source>
</evidence>
<feature type="chain" id="PRO_1000137109" description="N-acetyl-gamma-glutamyl-phosphate reductase">
    <location>
        <begin position="1"/>
        <end position="310"/>
    </location>
</feature>
<feature type="active site" evidence="1">
    <location>
        <position position="117"/>
    </location>
</feature>